<proteinExistence type="inferred from homology"/>
<comment type="function">
    <text evidence="1">Catalyzes the conversion of uracil and 5-phospho-alpha-D-ribose 1-diphosphate (PRPP) to UMP and diphosphate.</text>
</comment>
<comment type="catalytic activity">
    <reaction evidence="1">
        <text>UMP + diphosphate = 5-phospho-alpha-D-ribose 1-diphosphate + uracil</text>
        <dbReference type="Rhea" id="RHEA:13017"/>
        <dbReference type="ChEBI" id="CHEBI:17568"/>
        <dbReference type="ChEBI" id="CHEBI:33019"/>
        <dbReference type="ChEBI" id="CHEBI:57865"/>
        <dbReference type="ChEBI" id="CHEBI:58017"/>
        <dbReference type="EC" id="2.4.2.9"/>
    </reaction>
</comment>
<comment type="cofactor">
    <cofactor evidence="1">
        <name>Mg(2+)</name>
        <dbReference type="ChEBI" id="CHEBI:18420"/>
    </cofactor>
    <text evidence="1">Binds 1 Mg(2+) ion per subunit. The magnesium is bound as Mg-PRPP.</text>
</comment>
<comment type="activity regulation">
    <text evidence="1">Allosterically activated by GTP.</text>
</comment>
<comment type="pathway">
    <text evidence="1">Pyrimidine metabolism; UMP biosynthesis via salvage pathway; UMP from uracil: step 1/1.</text>
</comment>
<comment type="similarity">
    <text evidence="1">Belongs to the UPRTase family.</text>
</comment>
<comment type="sequence caution" evidence="2">
    <conflict type="erroneous initiation">
        <sequence resource="EMBL-CDS" id="SIU01966"/>
    </conflict>
    <text>Extended N-terminus.</text>
</comment>
<feature type="chain" id="PRO_0000120859" description="Uracil phosphoribosyltransferase">
    <location>
        <begin position="1"/>
        <end position="207"/>
    </location>
</feature>
<feature type="binding site" evidence="1">
    <location>
        <position position="77"/>
    </location>
    <ligand>
        <name>5-phospho-alpha-D-ribose 1-diphosphate</name>
        <dbReference type="ChEBI" id="CHEBI:58017"/>
    </ligand>
</feature>
<feature type="binding site" evidence="1">
    <location>
        <position position="102"/>
    </location>
    <ligand>
        <name>5-phospho-alpha-D-ribose 1-diphosphate</name>
        <dbReference type="ChEBI" id="CHEBI:58017"/>
    </ligand>
</feature>
<feature type="binding site" evidence="1">
    <location>
        <begin position="129"/>
        <end position="137"/>
    </location>
    <ligand>
        <name>5-phospho-alpha-D-ribose 1-diphosphate</name>
        <dbReference type="ChEBI" id="CHEBI:58017"/>
    </ligand>
</feature>
<feature type="binding site" evidence="1">
    <location>
        <position position="192"/>
    </location>
    <ligand>
        <name>uracil</name>
        <dbReference type="ChEBI" id="CHEBI:17568"/>
    </ligand>
</feature>
<feature type="binding site" evidence="1">
    <location>
        <begin position="197"/>
        <end position="199"/>
    </location>
    <ligand>
        <name>uracil</name>
        <dbReference type="ChEBI" id="CHEBI:17568"/>
    </ligand>
</feature>
<feature type="binding site" evidence="1">
    <location>
        <position position="198"/>
    </location>
    <ligand>
        <name>5-phospho-alpha-D-ribose 1-diphosphate</name>
        <dbReference type="ChEBI" id="CHEBI:58017"/>
    </ligand>
</feature>
<keyword id="KW-0021">Allosteric enzyme</keyword>
<keyword id="KW-0328">Glycosyltransferase</keyword>
<keyword id="KW-0342">GTP-binding</keyword>
<keyword id="KW-0460">Magnesium</keyword>
<keyword id="KW-0547">Nucleotide-binding</keyword>
<keyword id="KW-1185">Reference proteome</keyword>
<keyword id="KW-0808">Transferase</keyword>
<sequence>MQVHVVDHPLAAARLTTLRDERTDNAGFRAALRELTLLLIYEATRDAPCEPVPIRTPLAETVGSRLTKPPLLVPVLRAGLGMVDEAHAALPEAHVGFVGVARDEQTHQPVPYLDSLPDDLTDVPVMVLDPMVATGGSMTHTLGLLISRGAADITVLCVVAAPEGIAALQKAAPNVRLFTAAIDEGLNEVAYIVPGLGDAGDRQFGPR</sequence>
<protein>
    <recommendedName>
        <fullName evidence="1">Uracil phosphoribosyltransferase</fullName>
        <ecNumber evidence="1">2.4.2.9</ecNumber>
    </recommendedName>
    <alternativeName>
        <fullName evidence="1">UMP pyrophosphorylase</fullName>
    </alternativeName>
    <alternativeName>
        <fullName evidence="1">UPRTase</fullName>
    </alternativeName>
</protein>
<name>UPP_MYCBO</name>
<organism>
    <name type="scientific">Mycobacterium bovis (strain ATCC BAA-935 / AF2122/97)</name>
    <dbReference type="NCBI Taxonomy" id="233413"/>
    <lineage>
        <taxon>Bacteria</taxon>
        <taxon>Bacillati</taxon>
        <taxon>Actinomycetota</taxon>
        <taxon>Actinomycetes</taxon>
        <taxon>Mycobacteriales</taxon>
        <taxon>Mycobacteriaceae</taxon>
        <taxon>Mycobacterium</taxon>
        <taxon>Mycobacterium tuberculosis complex</taxon>
    </lineage>
</organism>
<reference key="1">
    <citation type="submission" date="1997-02" db="EMBL/GenBank/DDBJ databases">
        <authorList>
            <person name="Kim J.K."/>
            <person name="Choe Y.K."/>
        </authorList>
    </citation>
    <scope>NUCLEOTIDE SEQUENCE [GENOMIC DNA]</scope>
    <source>
        <strain>BCG</strain>
    </source>
</reference>
<reference key="2">
    <citation type="journal article" date="2003" name="Proc. Natl. Acad. Sci. U.S.A.">
        <title>The complete genome sequence of Mycobacterium bovis.</title>
        <authorList>
            <person name="Garnier T."/>
            <person name="Eiglmeier K."/>
            <person name="Camus J.-C."/>
            <person name="Medina N."/>
            <person name="Mansoor H."/>
            <person name="Pryor M."/>
            <person name="Duthoy S."/>
            <person name="Grondin S."/>
            <person name="Lacroix C."/>
            <person name="Monsempe C."/>
            <person name="Simon S."/>
            <person name="Harris B."/>
            <person name="Atkin R."/>
            <person name="Doggett J."/>
            <person name="Mayes R."/>
            <person name="Keating L."/>
            <person name="Wheeler P.R."/>
            <person name="Parkhill J."/>
            <person name="Barrell B.G."/>
            <person name="Cole S.T."/>
            <person name="Gordon S.V."/>
            <person name="Hewinson R.G."/>
        </authorList>
    </citation>
    <scope>NUCLEOTIDE SEQUENCE [LARGE SCALE GENOMIC DNA]</scope>
    <source>
        <strain>ATCC BAA-935 / AF2122/97</strain>
    </source>
</reference>
<reference key="3">
    <citation type="journal article" date="2017" name="Genome Announc.">
        <title>Updated reference genome sequence and annotation of Mycobacterium bovis AF2122/97.</title>
        <authorList>
            <person name="Malone K.M."/>
            <person name="Farrell D."/>
            <person name="Stuber T.P."/>
            <person name="Schubert O.T."/>
            <person name="Aebersold R."/>
            <person name="Robbe-Austerman S."/>
            <person name="Gordon S.V."/>
        </authorList>
    </citation>
    <scope>NUCLEOTIDE SEQUENCE [LARGE SCALE GENOMIC DNA]</scope>
    <scope>GENOME REANNOTATION</scope>
    <source>
        <strain>ATCC BAA-935 / AF2122/97</strain>
    </source>
</reference>
<accession>P0A659</accession>
<accession>A0A1R3Y4G8</accession>
<accession>P94928</accession>
<accession>X2BN45</accession>
<gene>
    <name evidence="1" type="primary">upp</name>
    <name type="ordered locus">BQ2027_MB3337C</name>
</gene>
<evidence type="ECO:0000255" key="1">
    <source>
        <dbReference type="HAMAP-Rule" id="MF_01218"/>
    </source>
</evidence>
<evidence type="ECO:0000305" key="2"/>
<dbReference type="EC" id="2.4.2.9" evidence="1"/>
<dbReference type="EMBL" id="U77913">
    <property type="protein sequence ID" value="AAB63301.1"/>
    <property type="molecule type" value="Genomic_DNA"/>
</dbReference>
<dbReference type="EMBL" id="LT708304">
    <property type="protein sequence ID" value="SIU01966.1"/>
    <property type="status" value="ALT_INIT"/>
    <property type="molecule type" value="Genomic_DNA"/>
</dbReference>
<dbReference type="RefSeq" id="NP_856982.1">
    <property type="nucleotide sequence ID" value="NC_002945.3"/>
</dbReference>
<dbReference type="RefSeq" id="WP_003417245.1">
    <property type="nucleotide sequence ID" value="NC_002945.4"/>
</dbReference>
<dbReference type="SMR" id="P0A659"/>
<dbReference type="GeneID" id="45427304"/>
<dbReference type="KEGG" id="mbo:BQ2027_MB3337C"/>
<dbReference type="PATRIC" id="fig|233413.5.peg.3667"/>
<dbReference type="UniPathway" id="UPA00574">
    <property type="reaction ID" value="UER00636"/>
</dbReference>
<dbReference type="Proteomes" id="UP000001419">
    <property type="component" value="Chromosome"/>
</dbReference>
<dbReference type="GO" id="GO:0005525">
    <property type="term" value="F:GTP binding"/>
    <property type="evidence" value="ECO:0007669"/>
    <property type="project" value="UniProtKB-KW"/>
</dbReference>
<dbReference type="GO" id="GO:0000287">
    <property type="term" value="F:magnesium ion binding"/>
    <property type="evidence" value="ECO:0007669"/>
    <property type="project" value="UniProtKB-UniRule"/>
</dbReference>
<dbReference type="GO" id="GO:0004845">
    <property type="term" value="F:uracil phosphoribosyltransferase activity"/>
    <property type="evidence" value="ECO:0007669"/>
    <property type="project" value="UniProtKB-UniRule"/>
</dbReference>
<dbReference type="GO" id="GO:0044206">
    <property type="term" value="P:UMP salvage"/>
    <property type="evidence" value="ECO:0007669"/>
    <property type="project" value="UniProtKB-UniRule"/>
</dbReference>
<dbReference type="GO" id="GO:0006223">
    <property type="term" value="P:uracil salvage"/>
    <property type="evidence" value="ECO:0007669"/>
    <property type="project" value="InterPro"/>
</dbReference>
<dbReference type="CDD" id="cd06223">
    <property type="entry name" value="PRTases_typeI"/>
    <property type="match status" value="1"/>
</dbReference>
<dbReference type="FunFam" id="3.40.50.2020:FF:000003">
    <property type="entry name" value="Uracil phosphoribosyltransferase"/>
    <property type="match status" value="1"/>
</dbReference>
<dbReference type="Gene3D" id="3.40.50.2020">
    <property type="match status" value="1"/>
</dbReference>
<dbReference type="HAMAP" id="MF_01218_B">
    <property type="entry name" value="Upp_B"/>
    <property type="match status" value="1"/>
</dbReference>
<dbReference type="InterPro" id="IPR000836">
    <property type="entry name" value="PRibTrfase_dom"/>
</dbReference>
<dbReference type="InterPro" id="IPR029057">
    <property type="entry name" value="PRTase-like"/>
</dbReference>
<dbReference type="InterPro" id="IPR034332">
    <property type="entry name" value="Upp_B"/>
</dbReference>
<dbReference type="InterPro" id="IPR050054">
    <property type="entry name" value="UPRTase/APRTase"/>
</dbReference>
<dbReference type="InterPro" id="IPR005765">
    <property type="entry name" value="Ura_phspho_trans"/>
</dbReference>
<dbReference type="NCBIfam" id="NF001097">
    <property type="entry name" value="PRK00129.1"/>
    <property type="match status" value="1"/>
</dbReference>
<dbReference type="NCBIfam" id="TIGR01091">
    <property type="entry name" value="upp"/>
    <property type="match status" value="1"/>
</dbReference>
<dbReference type="PANTHER" id="PTHR32315">
    <property type="entry name" value="ADENINE PHOSPHORIBOSYLTRANSFERASE"/>
    <property type="match status" value="1"/>
</dbReference>
<dbReference type="PANTHER" id="PTHR32315:SF4">
    <property type="entry name" value="URACIL PHOSPHORIBOSYLTRANSFERASE, CHLOROPLASTIC"/>
    <property type="match status" value="1"/>
</dbReference>
<dbReference type="Pfam" id="PF14681">
    <property type="entry name" value="UPRTase"/>
    <property type="match status" value="1"/>
</dbReference>
<dbReference type="SUPFAM" id="SSF53271">
    <property type="entry name" value="PRTase-like"/>
    <property type="match status" value="1"/>
</dbReference>